<feature type="chain" id="PRO_0000442781" description="SCARECROW-LIKE protein 7">
    <location>
        <begin position="1"/>
        <end position="588"/>
    </location>
</feature>
<feature type="domain" description="GRAS" evidence="4">
    <location>
        <begin position="212"/>
        <end position="588"/>
    </location>
</feature>
<feature type="region of interest" description="Disordered" evidence="5">
    <location>
        <begin position="23"/>
        <end position="46"/>
    </location>
</feature>
<feature type="region of interest" description="Disordered" evidence="5">
    <location>
        <begin position="75"/>
        <end position="95"/>
    </location>
</feature>
<feature type="region of interest" description="Disordered" evidence="5">
    <location>
        <begin position="181"/>
        <end position="204"/>
    </location>
</feature>
<feature type="region of interest" description="Leucine repeat I (LRI)" evidence="4">
    <location>
        <begin position="219"/>
        <end position="276"/>
    </location>
</feature>
<feature type="region of interest" description="VHIID" evidence="4">
    <location>
        <begin position="295"/>
        <end position="361"/>
    </location>
</feature>
<feature type="region of interest" description="Leucine repeat II (LRII)" evidence="4">
    <location>
        <begin position="377"/>
        <end position="408"/>
    </location>
</feature>
<feature type="region of interest" description="PFYRE" evidence="4">
    <location>
        <begin position="418"/>
        <end position="509"/>
    </location>
</feature>
<feature type="region of interest" description="SAW" evidence="4">
    <location>
        <begin position="512"/>
        <end position="588"/>
    </location>
</feature>
<feature type="short sequence motif" description="VHIID" evidence="4">
    <location>
        <begin position="326"/>
        <end position="330"/>
    </location>
</feature>
<feature type="short sequence motif" description="LXXLL motif" evidence="4">
    <location>
        <begin position="426"/>
        <end position="430"/>
    </location>
</feature>
<feature type="compositionally biased region" description="Low complexity" evidence="5">
    <location>
        <begin position="23"/>
        <end position="38"/>
    </location>
</feature>
<feature type="compositionally biased region" description="Pro residues" evidence="5">
    <location>
        <begin position="192"/>
        <end position="201"/>
    </location>
</feature>
<dbReference type="EMBL" id="KJ511863">
    <property type="protein sequence ID" value="AHZ13509.1"/>
    <property type="molecule type" value="mRNA"/>
</dbReference>
<dbReference type="SMR" id="A0A024B7I0"/>
<dbReference type="Proteomes" id="UP000694918">
    <property type="component" value="Unplaced"/>
</dbReference>
<dbReference type="GO" id="GO:0005634">
    <property type="term" value="C:nucleus"/>
    <property type="evidence" value="ECO:0007669"/>
    <property type="project" value="UniProtKB-SubCell"/>
</dbReference>
<dbReference type="GO" id="GO:0003677">
    <property type="term" value="F:DNA binding"/>
    <property type="evidence" value="ECO:0007669"/>
    <property type="project" value="UniProtKB-KW"/>
</dbReference>
<dbReference type="InterPro" id="IPR005202">
    <property type="entry name" value="TF_GRAS"/>
</dbReference>
<dbReference type="PANTHER" id="PTHR31636">
    <property type="entry name" value="OSJNBA0084A10.13 PROTEIN-RELATED"/>
    <property type="match status" value="1"/>
</dbReference>
<dbReference type="Pfam" id="PF03514">
    <property type="entry name" value="GRAS"/>
    <property type="match status" value="1"/>
</dbReference>
<dbReference type="PROSITE" id="PS50985">
    <property type="entry name" value="GRAS"/>
    <property type="match status" value="1"/>
</dbReference>
<organism>
    <name type="scientific">Populus euphratica</name>
    <name type="common">Euphrates poplar</name>
    <dbReference type="NCBI Taxonomy" id="75702"/>
    <lineage>
        <taxon>Eukaryota</taxon>
        <taxon>Viridiplantae</taxon>
        <taxon>Streptophyta</taxon>
        <taxon>Embryophyta</taxon>
        <taxon>Tracheophyta</taxon>
        <taxon>Spermatophyta</taxon>
        <taxon>Magnoliopsida</taxon>
        <taxon>eudicotyledons</taxon>
        <taxon>Gunneridae</taxon>
        <taxon>Pentapetalae</taxon>
        <taxon>rosids</taxon>
        <taxon>fabids</taxon>
        <taxon>Malpighiales</taxon>
        <taxon>Salicaceae</taxon>
        <taxon>Saliceae</taxon>
        <taxon>Populus</taxon>
    </lineage>
</organism>
<comment type="function">
    <text evidence="1 2 6">Probable transcription factor involved in plant development (By similarity). Involved in environmental abiotic stress resistance. May increase the expression of stress-responsive genes (PubMed:20616154). Binds DNA in vitro (By similarity).</text>
</comment>
<comment type="subunit">
    <text evidence="1">Homodimer.</text>
</comment>
<comment type="subcellular location">
    <subcellularLocation>
        <location evidence="6">Nucleus</location>
    </subcellularLocation>
</comment>
<comment type="induction">
    <text evidence="6">Up-regulated by drought and high salt stresses, and down-regulated by gibberellic acid (GA) treatment, but not by plant hormone abscisic acid (ABA) application in leaves. Under the salt treatment, expression is induced quickly, and it peaks at 3 hours. Under the drought treatment, the expression is not induced immediately, but reaches its maximum at 3 hours. Under the GA treatment, the expression becomes weaker within 5 hours.</text>
</comment>
<comment type="domain">
    <text evidence="1">The GRAS domain is involved in DNA-binding.</text>
</comment>
<comment type="biotechnology">
    <text evidence="7">Potentially useful for engineering drought- and salt-tolerant trees.</text>
</comment>
<comment type="similarity">
    <text evidence="3">Belongs to the GRAS family.</text>
</comment>
<evidence type="ECO:0000250" key="1">
    <source>
        <dbReference type="UniProtKB" id="Q53K16"/>
    </source>
</evidence>
<evidence type="ECO:0000250" key="2">
    <source>
        <dbReference type="UniProtKB" id="Q9SCR0"/>
    </source>
</evidence>
<evidence type="ECO:0000255" key="3"/>
<evidence type="ECO:0000255" key="4">
    <source>
        <dbReference type="PROSITE-ProRule" id="PRU01191"/>
    </source>
</evidence>
<evidence type="ECO:0000256" key="5">
    <source>
        <dbReference type="SAM" id="MobiDB-lite"/>
    </source>
</evidence>
<evidence type="ECO:0000269" key="6">
    <source>
    </source>
</evidence>
<evidence type="ECO:0000303" key="7">
    <source>
    </source>
</evidence>
<keyword id="KW-0238">DNA-binding</keyword>
<keyword id="KW-0539">Nucleus</keyword>
<keyword id="KW-1185">Reference proteome</keyword>
<keyword id="KW-0346">Stress response</keyword>
<keyword id="KW-0804">Transcription</keyword>
<keyword id="KW-0805">Transcription regulation</keyword>
<sequence>MAYMCADSGNLMAIAQQVIKQKQQQEQQQQQSHHPQQQFLGLNPFSLNPWPSTTMSANPNLGYGLSGPAAFSDPFQSGPDTGDPPGFSFSNMEHQHSGGFRFPDFTGAGGEFDSDEWMDSLMNGGDSTDSSNLPSGCDAWQNNADFGIYPSDPFNTSPSRLTVGCSPPSDLNRVISDSLWADPSPQEIKPKTSPPQQPPPTAKNEVVVGSKEVVELSSSPVLKAFVECAQLVESKVDQAVKSLIKLKESVSENGDPGERVGFYFVQGLCRRVAVGELDDLKNFHQTTSEEFTLSYKALNDACPYSKFAHLTANQAILEATEKASKIHIVDFGIVQGIQWAALLQALATRSAGKPVRIRISGIPAPVLGKNPAASLLATGNRLLDFAKLLDLNFEFEPILTPIQELNESCFRVEPDEVLAVNFMLQLYNLLGETPGAVETALKMAKSLNPRIVTLGEYEVSLNRVGYLTRFKNALRYYTAVFESLDPNMSRDSQERLQVERLLLGRRISGVLGPDGIRRERMENKEQWRVLMESSGFESVSLSHYAMSQAKILLWNYNYSTLYSLDDSQPAFLTLAWNEVPLLTVSSWR</sequence>
<protein>
    <recommendedName>
        <fullName evidence="7">SCARECROW-LIKE protein 7</fullName>
    </recommendedName>
    <alternativeName>
        <fullName evidence="7">PeSCL7</fullName>
    </alternativeName>
</protein>
<gene>
    <name evidence="7" type="primary">SCL7</name>
</gene>
<reference key="1">
    <citation type="journal article" date="2010" name="J. Exp. Bot.">
        <title>The salt- and drought-inducible poplar GRAS protein SCL7 confers salt and drought tolerance in Arabidopsis thaliana.</title>
        <authorList>
            <person name="Ma H.S."/>
            <person name="Liang D."/>
            <person name="Shuai P."/>
            <person name="Xia X.L."/>
            <person name="Yin W.L."/>
        </authorList>
    </citation>
    <scope>NUCLEOTIDE SEQUENCE [MRNA]</scope>
    <scope>FUNCTION</scope>
    <scope>SUBCELLULAR LOCATION</scope>
    <scope>INDUCTION</scope>
    <scope>BIOTECHNOLOGY</scope>
</reference>
<name>SCL7_POPEU</name>
<proteinExistence type="evidence at transcript level"/>
<accession>A0A024B7I0</accession>